<gene>
    <name evidence="1" type="primary">rpoC2</name>
    <name type="ordered locus">PCC_0095</name>
</gene>
<organism>
    <name type="scientific">Paulinella chromatophora</name>
    <dbReference type="NCBI Taxonomy" id="39717"/>
    <lineage>
        <taxon>Eukaryota</taxon>
        <taxon>Sar</taxon>
        <taxon>Rhizaria</taxon>
        <taxon>Cercozoa</taxon>
        <taxon>Imbricatea</taxon>
        <taxon>Silicofilosea</taxon>
        <taxon>Euglyphida</taxon>
        <taxon>Paulinellidae</taxon>
        <taxon>Paulinella</taxon>
    </lineage>
</organism>
<protein>
    <recommendedName>
        <fullName evidence="1">DNA-directed RNA polymerase subunit beta''</fullName>
        <ecNumber evidence="1">2.7.7.6</ecNumber>
    </recommendedName>
    <alternativeName>
        <fullName evidence="1">DNA-directed RNA polymerase subunit beta'</fullName>
        <shortName evidence="1">RNAP subunit beta'</shortName>
    </alternativeName>
    <alternativeName>
        <fullName evidence="1">PEP</fullName>
    </alternativeName>
    <alternativeName>
        <fullName evidence="1">Plastid-encoded RNA polymerase subunit beta''</fullName>
        <shortName evidence="1">RNA polymerase subunit beta''</shortName>
    </alternativeName>
    <alternativeName>
        <fullName evidence="1">RNA polymerase subunit beta'</fullName>
    </alternativeName>
    <alternativeName>
        <fullName evidence="1">Transcriptase subunit beta'</fullName>
    </alternativeName>
</protein>
<proteinExistence type="inferred from homology"/>
<reference key="1">
    <citation type="journal article" date="2008" name="Curr. Biol.">
        <title>Chromatophore genome sequence of Paulinella sheds light on acquisition of photosynthesis by eukaryotes.</title>
        <authorList>
            <person name="Nowack E.C.M."/>
            <person name="Melkonian M."/>
            <person name="Gloeckner G."/>
        </authorList>
    </citation>
    <scope>NUCLEOTIDE SEQUENCE [LARGE SCALE GENOMIC DNA]</scope>
</reference>
<accession>B1X3M8</accession>
<geneLocation type="organellar chromatophore"/>
<feature type="chain" id="PRO_0000353587" description="DNA-directed RNA polymerase subunit beta''">
    <location>
        <begin position="1"/>
        <end position="1372"/>
    </location>
</feature>
<feature type="binding site" evidence="1">
    <location>
        <position position="252"/>
    </location>
    <ligand>
        <name>Zn(2+)</name>
        <dbReference type="ChEBI" id="CHEBI:29105"/>
    </ligand>
</feature>
<feature type="binding site" evidence="1">
    <location>
        <position position="321"/>
    </location>
    <ligand>
        <name>Zn(2+)</name>
        <dbReference type="ChEBI" id="CHEBI:29105"/>
    </ligand>
</feature>
<feature type="binding site" evidence="1">
    <location>
        <position position="328"/>
    </location>
    <ligand>
        <name>Zn(2+)</name>
        <dbReference type="ChEBI" id="CHEBI:29105"/>
    </ligand>
</feature>
<feature type="binding site" evidence="1">
    <location>
        <position position="331"/>
    </location>
    <ligand>
        <name>Zn(2+)</name>
        <dbReference type="ChEBI" id="CHEBI:29105"/>
    </ligand>
</feature>
<evidence type="ECO:0000255" key="1">
    <source>
        <dbReference type="HAMAP-Rule" id="MF_01324"/>
    </source>
</evidence>
<sequence>MTPSSNSVKTSRFNKVRTDIIGDTDLPNNLIKSLSKSPPHFYNHIIDKKGLRDIIAWAYKSHGIAATAELADDIKDLGFKYATVAAVSISIDDLKIPKEKKFLLEQAEEQITATEERYRLGEITEVERHTKVIDTWTETNERLVLAIKKNFNENDPLNSVWMMANSGARGNISQVRQLVGMRGLMANPQGEIIDLPIRANFKEGLTVTEYVISSYGARKGLVDTALRTADSGYLTRRLVDVAQDVIVREDDCGTERGIVVEADEKGNYGTKLVGRLAAQSVVVDNENRVLVRRNREIDLITACRIEAADIPSVIVRSPLTCEAARSVCRKCYGWALAHNALVDLGEAVGIIAAQSIGEPGTQLTMRTFHTGGVSTAETGLVRSTLEGSIIFGSKARVRPYRTPHGVEAQQAETDFVLQVKPNNGKKSQKVDITNGSLLFVSDSQEVASDTILAQIISGSSVKKSVEKATKDVICDLAGQVRYDEALQPKEVIDRQGSATHKATRLGRVWVLSGDVYNLPPNAKPVIQGNSKVEEGEVLAESRLSSEHGGVVRLRESTGDSREVQIVTTSMTLKDFKLLGESTHSGEIWHLEAKDTTRYLLKTQPGSKIGNGEVIAELADERFRTKTGGLVKYAPGGLSIKKARSAKNGYEVNKGGTLLWIPQETHEINKDISLLMIEDGQWIEDKTEVVKDIFSQIAGIVTVTQKNDILREITVRPGTLYPCNESKVIERFKGEGLLVDEEEIISKNLKAEKRVFVQSVETSEGPQLLIRPVEEYTIPEVAHLPELAIVKQNSGPYLGLKATQRLNFKDGELIKSVEGVELLKTQLILETFDTTPQMTVDVEKVTDKRSKTLERLQLVILETLLVRRDTISDASHGSTHTELQVNDGDLVKSGDVVATTQILCKEVGIVQLPKQIDNEPIRRIIVERDQDTMTIPLGSAPLVSVGQRLVDGDLLAENDPSPCCGQVETIKNNTIIIRIGRPYMISSDSTLHVKDRELVQRGDSLALLVFERQKTGDIVQGLPRIEELLEARRPRDSAVLCKQPGVLTLRHDEETDSSIAVIKSANGEETEYPILLGRNLMVSVGQHIKAGELLTDGPINPHELLEYLFADLRSRKPLMEAAREAIAKVQSRLVTEVQNVYKSQGVTIHNKHIEVIVRQMTSKVRIEDAGETTLLPGELIELRHVEKVNKAMFMTSSSPAVFIPELLGITKASLNTDSFISAASFQETTRVLTEAAIEGKTDYLRGLKENVIIGRLIPAGTGFSGFEEELRSEAGPHPDILDEDPAGYRRMQNLRPDYTVDMPAAASASPAALLDDPSDDELEATRSRHGIEVTTSNTAAFTRPVIVNKIMEDQILDPDIIASLQEEGLLTRE</sequence>
<name>RPOC2_PAUCH</name>
<keyword id="KW-0240">DNA-directed RNA polymerase</keyword>
<keyword id="KW-0479">Metal-binding</keyword>
<keyword id="KW-0548">Nucleotidyltransferase</keyword>
<keyword id="KW-0994">Organellar chromatophore</keyword>
<keyword id="KW-0934">Plastid</keyword>
<keyword id="KW-0804">Transcription</keyword>
<keyword id="KW-0808">Transferase</keyword>
<keyword id="KW-0862">Zinc</keyword>
<comment type="function">
    <text evidence="1">DNA-dependent RNA polymerase catalyzes the transcription of DNA into RNA using the four ribonucleoside triphosphates as substrates.</text>
</comment>
<comment type="catalytic activity">
    <reaction evidence="1">
        <text>RNA(n) + a ribonucleoside 5'-triphosphate = RNA(n+1) + diphosphate</text>
        <dbReference type="Rhea" id="RHEA:21248"/>
        <dbReference type="Rhea" id="RHEA-COMP:14527"/>
        <dbReference type="Rhea" id="RHEA-COMP:17342"/>
        <dbReference type="ChEBI" id="CHEBI:33019"/>
        <dbReference type="ChEBI" id="CHEBI:61557"/>
        <dbReference type="ChEBI" id="CHEBI:140395"/>
        <dbReference type="EC" id="2.7.7.6"/>
    </reaction>
</comment>
<comment type="cofactor">
    <cofactor evidence="1">
        <name>Zn(2+)</name>
        <dbReference type="ChEBI" id="CHEBI:29105"/>
    </cofactor>
    <text evidence="1">Binds 1 Zn(2+) ion per subunit.</text>
</comment>
<comment type="subunit">
    <text evidence="1">In plastids the minimal PEP RNA polymerase catalytic core is composed of four subunits: alpha, beta, beta', and beta''. When a (nuclear-encoded) sigma factor is associated with the core the holoenzyme is formed, which can initiate transcription.</text>
</comment>
<comment type="subcellular location">
    <subcellularLocation>
        <location>Plastid</location>
        <location>Organellar chromatophore</location>
    </subcellularLocation>
</comment>
<comment type="similarity">
    <text evidence="1">Belongs to the RNA polymerase beta' chain family. RpoC2 subfamily.</text>
</comment>
<dbReference type="EC" id="2.7.7.6" evidence="1"/>
<dbReference type="EMBL" id="CP000815">
    <property type="protein sequence ID" value="ACB42547.1"/>
    <property type="molecule type" value="Genomic_DNA"/>
</dbReference>
<dbReference type="RefSeq" id="YP_002048757.1">
    <property type="nucleotide sequence ID" value="NC_011087.1"/>
</dbReference>
<dbReference type="SMR" id="B1X3M8"/>
<dbReference type="GeneID" id="6481180"/>
<dbReference type="GO" id="GO:0000428">
    <property type="term" value="C:DNA-directed RNA polymerase complex"/>
    <property type="evidence" value="ECO:0007669"/>
    <property type="project" value="UniProtKB-KW"/>
</dbReference>
<dbReference type="GO" id="GO:0005739">
    <property type="term" value="C:mitochondrion"/>
    <property type="evidence" value="ECO:0007669"/>
    <property type="project" value="GOC"/>
</dbReference>
<dbReference type="GO" id="GO:0070111">
    <property type="term" value="C:organellar chromatophore"/>
    <property type="evidence" value="ECO:0007669"/>
    <property type="project" value="UniProtKB-SubCell"/>
</dbReference>
<dbReference type="GO" id="GO:0009536">
    <property type="term" value="C:plastid"/>
    <property type="evidence" value="ECO:0007669"/>
    <property type="project" value="UniProtKB-KW"/>
</dbReference>
<dbReference type="GO" id="GO:0003677">
    <property type="term" value="F:DNA binding"/>
    <property type="evidence" value="ECO:0007669"/>
    <property type="project" value="InterPro"/>
</dbReference>
<dbReference type="GO" id="GO:0003899">
    <property type="term" value="F:DNA-directed RNA polymerase activity"/>
    <property type="evidence" value="ECO:0007669"/>
    <property type="project" value="UniProtKB-EC"/>
</dbReference>
<dbReference type="GO" id="GO:0046872">
    <property type="term" value="F:metal ion binding"/>
    <property type="evidence" value="ECO:0007669"/>
    <property type="project" value="UniProtKB-KW"/>
</dbReference>
<dbReference type="GO" id="GO:0006351">
    <property type="term" value="P:DNA-templated transcription"/>
    <property type="evidence" value="ECO:0007669"/>
    <property type="project" value="InterPro"/>
</dbReference>
<dbReference type="CDD" id="cd02655">
    <property type="entry name" value="RNAP_beta'_C"/>
    <property type="match status" value="1"/>
</dbReference>
<dbReference type="FunFam" id="1.10.150.390:FF:000002">
    <property type="entry name" value="DNA-directed RNA polymerase subunit beta"/>
    <property type="match status" value="1"/>
</dbReference>
<dbReference type="Gene3D" id="1.10.132.30">
    <property type="match status" value="1"/>
</dbReference>
<dbReference type="Gene3D" id="1.10.150.390">
    <property type="match status" value="1"/>
</dbReference>
<dbReference type="Gene3D" id="1.10.1790.20">
    <property type="match status" value="1"/>
</dbReference>
<dbReference type="Gene3D" id="2.40.50.100">
    <property type="match status" value="1"/>
</dbReference>
<dbReference type="Gene3D" id="1.10.274.100">
    <property type="entry name" value="RNA polymerase Rpb1, domain 3"/>
    <property type="match status" value="1"/>
</dbReference>
<dbReference type="HAMAP" id="MF_01324">
    <property type="entry name" value="RNApol_bact_RpoC2"/>
    <property type="match status" value="1"/>
</dbReference>
<dbReference type="InterPro" id="IPR012756">
    <property type="entry name" value="DNA-dir_RpoC2_beta_pp"/>
</dbReference>
<dbReference type="InterPro" id="IPR045867">
    <property type="entry name" value="DNA-dir_RpoC_beta_prime"/>
</dbReference>
<dbReference type="InterPro" id="IPR007066">
    <property type="entry name" value="RNA_pol_Rpb1_3"/>
</dbReference>
<dbReference type="InterPro" id="IPR042102">
    <property type="entry name" value="RNA_pol_Rpb1_3_sf"/>
</dbReference>
<dbReference type="InterPro" id="IPR007083">
    <property type="entry name" value="RNA_pol_Rpb1_4"/>
</dbReference>
<dbReference type="InterPro" id="IPR007081">
    <property type="entry name" value="RNA_pol_Rpb1_5"/>
</dbReference>
<dbReference type="InterPro" id="IPR038120">
    <property type="entry name" value="Rpb1_funnel_sf"/>
</dbReference>
<dbReference type="NCBIfam" id="NF002724">
    <property type="entry name" value="PRK02597.1"/>
    <property type="match status" value="1"/>
</dbReference>
<dbReference type="NCBIfam" id="TIGR02388">
    <property type="entry name" value="rpoC2_cyan"/>
    <property type="match status" value="1"/>
</dbReference>
<dbReference type="PANTHER" id="PTHR19376">
    <property type="entry name" value="DNA-DIRECTED RNA POLYMERASE"/>
    <property type="match status" value="1"/>
</dbReference>
<dbReference type="PANTHER" id="PTHR19376:SF54">
    <property type="entry name" value="DNA-DIRECTED RNA POLYMERASE SUBUNIT BETA"/>
    <property type="match status" value="1"/>
</dbReference>
<dbReference type="Pfam" id="PF04983">
    <property type="entry name" value="RNA_pol_Rpb1_3"/>
    <property type="match status" value="1"/>
</dbReference>
<dbReference type="Pfam" id="PF05000">
    <property type="entry name" value="RNA_pol_Rpb1_4"/>
    <property type="match status" value="1"/>
</dbReference>
<dbReference type="Pfam" id="PF04998">
    <property type="entry name" value="RNA_pol_Rpb1_5"/>
    <property type="match status" value="1"/>
</dbReference>
<dbReference type="SUPFAM" id="SSF64484">
    <property type="entry name" value="beta and beta-prime subunits of DNA dependent RNA-polymerase"/>
    <property type="match status" value="1"/>
</dbReference>